<gene>
    <name evidence="1" type="primary">thrB</name>
    <name type="ordered locus">Nwi_2688</name>
</gene>
<evidence type="ECO:0000255" key="1">
    <source>
        <dbReference type="HAMAP-Rule" id="MF_00301"/>
    </source>
</evidence>
<keyword id="KW-0028">Amino-acid biosynthesis</keyword>
<keyword id="KW-0067">ATP-binding</keyword>
<keyword id="KW-0418">Kinase</keyword>
<keyword id="KW-0547">Nucleotide-binding</keyword>
<keyword id="KW-1185">Reference proteome</keyword>
<keyword id="KW-0791">Threonine biosynthesis</keyword>
<keyword id="KW-0808">Transferase</keyword>
<proteinExistence type="inferred from homology"/>
<name>KHSE_NITWN</name>
<comment type="catalytic activity">
    <reaction evidence="1">
        <text>L-homoserine + ATP = O-phospho-L-homoserine + ADP + H(+)</text>
        <dbReference type="Rhea" id="RHEA:13985"/>
        <dbReference type="ChEBI" id="CHEBI:15378"/>
        <dbReference type="ChEBI" id="CHEBI:30616"/>
        <dbReference type="ChEBI" id="CHEBI:57476"/>
        <dbReference type="ChEBI" id="CHEBI:57590"/>
        <dbReference type="ChEBI" id="CHEBI:456216"/>
        <dbReference type="EC" id="2.7.1.39"/>
    </reaction>
</comment>
<comment type="pathway">
    <text evidence="1">Amino-acid biosynthesis; L-threonine biosynthesis; L-threonine from L-aspartate: step 4/5.</text>
</comment>
<comment type="similarity">
    <text evidence="1">Belongs to the pseudomonas-type ThrB family.</text>
</comment>
<dbReference type="EC" id="2.7.1.39" evidence="1"/>
<dbReference type="EMBL" id="CP000115">
    <property type="protein sequence ID" value="ABA05941.1"/>
    <property type="molecule type" value="Genomic_DNA"/>
</dbReference>
<dbReference type="RefSeq" id="WP_011315887.1">
    <property type="nucleotide sequence ID" value="NC_007406.1"/>
</dbReference>
<dbReference type="SMR" id="Q3SP50"/>
<dbReference type="STRING" id="323098.Nwi_2688"/>
<dbReference type="KEGG" id="nwi:Nwi_2688"/>
<dbReference type="eggNOG" id="COG2334">
    <property type="taxonomic scope" value="Bacteria"/>
</dbReference>
<dbReference type="HOGENOM" id="CLU_053300_1_0_5"/>
<dbReference type="OrthoDB" id="9777460at2"/>
<dbReference type="UniPathway" id="UPA00050">
    <property type="reaction ID" value="UER00064"/>
</dbReference>
<dbReference type="Proteomes" id="UP000002531">
    <property type="component" value="Chromosome"/>
</dbReference>
<dbReference type="GO" id="GO:0005524">
    <property type="term" value="F:ATP binding"/>
    <property type="evidence" value="ECO:0007669"/>
    <property type="project" value="UniProtKB-KW"/>
</dbReference>
<dbReference type="GO" id="GO:0004413">
    <property type="term" value="F:homoserine kinase activity"/>
    <property type="evidence" value="ECO:0007669"/>
    <property type="project" value="UniProtKB-UniRule"/>
</dbReference>
<dbReference type="GO" id="GO:0009088">
    <property type="term" value="P:threonine biosynthetic process"/>
    <property type="evidence" value="ECO:0007669"/>
    <property type="project" value="UniProtKB-UniRule"/>
</dbReference>
<dbReference type="CDD" id="cd05153">
    <property type="entry name" value="HomoserineK_II"/>
    <property type="match status" value="1"/>
</dbReference>
<dbReference type="Gene3D" id="3.90.1200.10">
    <property type="match status" value="1"/>
</dbReference>
<dbReference type="Gene3D" id="3.30.200.20">
    <property type="entry name" value="Phosphorylase Kinase, domain 1"/>
    <property type="match status" value="1"/>
</dbReference>
<dbReference type="HAMAP" id="MF_00301">
    <property type="entry name" value="Homoser_kinase_2"/>
    <property type="match status" value="1"/>
</dbReference>
<dbReference type="InterPro" id="IPR002575">
    <property type="entry name" value="Aminoglycoside_PTrfase"/>
</dbReference>
<dbReference type="InterPro" id="IPR005280">
    <property type="entry name" value="Homoserine_kinase_II"/>
</dbReference>
<dbReference type="InterPro" id="IPR011009">
    <property type="entry name" value="Kinase-like_dom_sf"/>
</dbReference>
<dbReference type="InterPro" id="IPR050249">
    <property type="entry name" value="Pseudomonas-type_ThrB"/>
</dbReference>
<dbReference type="NCBIfam" id="NF003558">
    <property type="entry name" value="PRK05231.1"/>
    <property type="match status" value="1"/>
</dbReference>
<dbReference type="NCBIfam" id="TIGR00938">
    <property type="entry name" value="thrB_alt"/>
    <property type="match status" value="1"/>
</dbReference>
<dbReference type="PANTHER" id="PTHR21064:SF6">
    <property type="entry name" value="AMINOGLYCOSIDE PHOSPHOTRANSFERASE DOMAIN-CONTAINING PROTEIN"/>
    <property type="match status" value="1"/>
</dbReference>
<dbReference type="PANTHER" id="PTHR21064">
    <property type="entry name" value="AMINOGLYCOSIDE PHOSPHOTRANSFERASE DOMAIN-CONTAINING PROTEIN-RELATED"/>
    <property type="match status" value="1"/>
</dbReference>
<dbReference type="Pfam" id="PF01636">
    <property type="entry name" value="APH"/>
    <property type="match status" value="1"/>
</dbReference>
<dbReference type="SUPFAM" id="SSF56112">
    <property type="entry name" value="Protein kinase-like (PK-like)"/>
    <property type="match status" value="1"/>
</dbReference>
<organism>
    <name type="scientific">Nitrobacter winogradskyi (strain ATCC 25391 / DSM 10237 / CIP 104748 / NCIMB 11846 / Nb-255)</name>
    <dbReference type="NCBI Taxonomy" id="323098"/>
    <lineage>
        <taxon>Bacteria</taxon>
        <taxon>Pseudomonadati</taxon>
        <taxon>Pseudomonadota</taxon>
        <taxon>Alphaproteobacteria</taxon>
        <taxon>Hyphomicrobiales</taxon>
        <taxon>Nitrobacteraceae</taxon>
        <taxon>Nitrobacter</taxon>
    </lineage>
</organism>
<reference key="1">
    <citation type="journal article" date="2006" name="Appl. Environ. Microbiol.">
        <title>Genome sequence of the chemolithoautotrophic nitrite-oxidizing bacterium Nitrobacter winogradskyi Nb-255.</title>
        <authorList>
            <person name="Starkenburg S.R."/>
            <person name="Chain P.S.G."/>
            <person name="Sayavedra-Soto L.A."/>
            <person name="Hauser L."/>
            <person name="Land M.L."/>
            <person name="Larimer F.W."/>
            <person name="Malfatti S.A."/>
            <person name="Klotz M.G."/>
            <person name="Bottomley P.J."/>
            <person name="Arp D.J."/>
            <person name="Hickey W.J."/>
        </authorList>
    </citation>
    <scope>NUCLEOTIDE SEQUENCE [LARGE SCALE GENOMIC DNA]</scope>
    <source>
        <strain>ATCC 25391 / DSM 10237 / CIP 104748 / NCIMB 11846 / Nb-255</strain>
    </source>
</reference>
<sequence length="326" mass="35859">MAVYTDVAAEELADFLKAYDIGELLSYKGIAEGVENSNYLLHTTSGSFFLTLYEKRVAIDDLPFFLGLMGHLATHGIVCPQPVRTRNGETLGSLAGRPAAIIDFLEGVWPRKPNVAHCAAVGAALAKLHLAGRDFSMRRANALSVWSWRPLFEQAGACADTVQPGLHDFLKAELDHLEARWPQELPGGVIHADLFPDNVLFLGDRLSGLIDFYFACHDFFAYDVAICLNAWCFEPDHAFNVTKARALLGAYHRERALSEAEQAALPLLARGAALRFLLTRLVDFLNVPAGALVKPKDPLEYVRKLRFQQRVGGVRDYGVAILGPVA</sequence>
<accession>Q3SP50</accession>
<protein>
    <recommendedName>
        <fullName evidence="1">Homoserine kinase</fullName>
        <shortName evidence="1">HK</shortName>
        <shortName evidence="1">HSK</shortName>
        <ecNumber evidence="1">2.7.1.39</ecNumber>
    </recommendedName>
</protein>
<feature type="chain" id="PRO_0000300796" description="Homoserine kinase">
    <location>
        <begin position="1"/>
        <end position="326"/>
    </location>
</feature>